<proteinExistence type="inferred from homology"/>
<sequence length="451" mass="51058">MKRTIQETPGPSSTTVPPPKKLNSQRNGSNLEPGSIYFTPIGGISVPRQESESSRSLDEILADIRPINSLHFSFMLDFEFLIGSYPPSLREYPITLVVGAPDAPDLLKCTKNQKLVTVVGASLPIPFGTHHTKMSILEDEDGRFHVIVSTANLVPDDWEFKTQQFYYNFGVKIASGTVPRSDFQDDLLEYLSMYRNQLDTWKQLLQKVDFSQISDRLIFSTPGYHTDPPTQRPGHPRLFRILSEKFPFDASYEHTERCTFVAQCSSIGSLGSAPINWFRGQFLQSLEGANPSPKQKPAKMYLVFPSVEDVRTSCQGYAGGCSVPYRNSVHARQKWLQGNMCKWRSNAKRRTNAVPHCKTYVKYDKKVAIWQLLTSANLSKAAWGEVSFNKSKNVEQLMIRSWEMGVLITDPSRFNIPFDYPLVPYSATDEPFVTDKKHEKPDILGCIWTPP</sequence>
<comment type="function">
    <text evidence="1">DNA repair enzyme that can remove a variety of covalent adducts from DNA through hydrolysis of a 3'-phosphodiester bond, giving rise to DNA with a free 3' phosphate. Catalyzes the hydrolysis of dead-end complexes between DNA and the topoisomerase I active site tyrosine residue. Hydrolyzes 3'-phosphoglycolates on protruding 3' ends on DNA double-strand breaks due to DNA damage by radiation and free radicals. Acts on blunt-ended double-strand DNA breaks and on single-stranded DNA. May have low 3'exonuclease activity and may be able to remove a single nucleoside from the 3'end of DNA and RNA molecules with 3'hydroxyl groups. Has no exonuclease activity towards DNA or RNA with a 3'phosphate (By similarity).</text>
</comment>
<comment type="subcellular location">
    <subcellularLocation>
        <location evidence="1">Nucleus</location>
    </subcellularLocation>
</comment>
<comment type="similarity">
    <text evidence="3">Belongs to the tyrosyl-DNA phosphodiesterase family.</text>
</comment>
<reference key="1">
    <citation type="journal article" date="1998" name="Science">
        <title>Genome sequence of the nematode C. elegans: a platform for investigating biology.</title>
        <authorList>
            <consortium name="The C. elegans sequencing consortium"/>
        </authorList>
    </citation>
    <scope>NUCLEOTIDE SEQUENCE [LARGE SCALE GENOMIC DNA]</scope>
    <source>
        <strain>Bristol N2</strain>
    </source>
</reference>
<evidence type="ECO:0000250" key="1">
    <source>
        <dbReference type="UniProtKB" id="Q9NUW8"/>
    </source>
</evidence>
<evidence type="ECO:0000256" key="2">
    <source>
        <dbReference type="SAM" id="MobiDB-lite"/>
    </source>
</evidence>
<evidence type="ECO:0000305" key="3"/>
<evidence type="ECO:0000312" key="4">
    <source>
        <dbReference type="WormBase" id="F52C12.1a"/>
    </source>
</evidence>
<keyword id="KW-0227">DNA damage</keyword>
<keyword id="KW-0234">DNA repair</keyword>
<keyword id="KW-0269">Exonuclease</keyword>
<keyword id="KW-0378">Hydrolase</keyword>
<keyword id="KW-0540">Nuclease</keyword>
<keyword id="KW-0539">Nucleus</keyword>
<keyword id="KW-1185">Reference proteome</keyword>
<keyword id="KW-0677">Repeat</keyword>
<protein>
    <recommendedName>
        <fullName>Probable tyrosyl-DNA phosphodiesterase</fullName>
        <shortName>Tyr-DNA phosphodiesterase</shortName>
        <ecNumber evidence="1">3.1.4.-</ecNumber>
    </recommendedName>
</protein>
<dbReference type="EC" id="3.1.4.-" evidence="1"/>
<dbReference type="EMBL" id="FO081438">
    <property type="protein sequence ID" value="CCD71624.1"/>
    <property type="molecule type" value="Genomic_DNA"/>
</dbReference>
<dbReference type="PIR" id="A88641">
    <property type="entry name" value="A88641"/>
</dbReference>
<dbReference type="SMR" id="Q9TXV7"/>
<dbReference type="BioGRID" id="42151">
    <property type="interactions" value="1"/>
</dbReference>
<dbReference type="FunCoup" id="Q9TXV7">
    <property type="interactions" value="2351"/>
</dbReference>
<dbReference type="STRING" id="6239.F52C12.1a.1"/>
<dbReference type="PaxDb" id="6239-F52C12.1a"/>
<dbReference type="PeptideAtlas" id="Q9TXV7"/>
<dbReference type="EnsemblMetazoa" id="F52C12.1a.1">
    <property type="protein sequence ID" value="F52C12.1a.1"/>
    <property type="gene ID" value="WBGene00018678"/>
</dbReference>
<dbReference type="KEGG" id="cel:CELE_F52C12.1"/>
<dbReference type="UCSC" id="F52C12.1">
    <property type="organism name" value="c. elegans"/>
</dbReference>
<dbReference type="AGR" id="WB:WBGene00018678"/>
<dbReference type="CTD" id="176996"/>
<dbReference type="WormBase" id="F52C12.1a">
    <property type="protein sequence ID" value="CE19434"/>
    <property type="gene ID" value="WBGene00018678"/>
    <property type="gene designation" value="tdpo-1"/>
</dbReference>
<dbReference type="eggNOG" id="KOG2031">
    <property type="taxonomic scope" value="Eukaryota"/>
</dbReference>
<dbReference type="InParanoid" id="Q9TXV7"/>
<dbReference type="OMA" id="WFRGQFL"/>
<dbReference type="OrthoDB" id="47785at2759"/>
<dbReference type="PhylomeDB" id="Q9TXV7"/>
<dbReference type="PRO" id="PR:Q9TXV7"/>
<dbReference type="Proteomes" id="UP000001940">
    <property type="component" value="Chromosome IV"/>
</dbReference>
<dbReference type="Bgee" id="WBGene00018678">
    <property type="expression patterns" value="Expressed in germ line (C elegans) and 4 other cell types or tissues"/>
</dbReference>
<dbReference type="ExpressionAtlas" id="Q9TXV7">
    <property type="expression patterns" value="baseline and differential"/>
</dbReference>
<dbReference type="GO" id="GO:0005634">
    <property type="term" value="C:nucleus"/>
    <property type="evidence" value="ECO:0000318"/>
    <property type="project" value="GO_Central"/>
</dbReference>
<dbReference type="GO" id="GO:0017005">
    <property type="term" value="F:3'-tyrosyl-DNA phosphodiesterase activity"/>
    <property type="evidence" value="ECO:0000318"/>
    <property type="project" value="GO_Central"/>
</dbReference>
<dbReference type="GO" id="GO:0003690">
    <property type="term" value="F:double-stranded DNA binding"/>
    <property type="evidence" value="ECO:0000318"/>
    <property type="project" value="GO_Central"/>
</dbReference>
<dbReference type="GO" id="GO:0004527">
    <property type="term" value="F:exonuclease activity"/>
    <property type="evidence" value="ECO:0007669"/>
    <property type="project" value="UniProtKB-KW"/>
</dbReference>
<dbReference type="GO" id="GO:0003697">
    <property type="term" value="F:single-stranded DNA binding"/>
    <property type="evidence" value="ECO:0000318"/>
    <property type="project" value="GO_Central"/>
</dbReference>
<dbReference type="GO" id="GO:0006281">
    <property type="term" value="P:DNA repair"/>
    <property type="evidence" value="ECO:0000318"/>
    <property type="project" value="GO_Central"/>
</dbReference>
<dbReference type="CDD" id="cd09195">
    <property type="entry name" value="PLDc_mTdp1_2"/>
    <property type="match status" value="1"/>
</dbReference>
<dbReference type="FunFam" id="3.30.870.10:FF:000080">
    <property type="entry name" value="Probable tyrosyl-DNA phosphodiesterase"/>
    <property type="match status" value="1"/>
</dbReference>
<dbReference type="FunFam" id="3.30.870.10:FF:000028">
    <property type="entry name" value="Tyrosyl-DNA phosphodiesterase 1"/>
    <property type="match status" value="1"/>
</dbReference>
<dbReference type="Gene3D" id="3.30.870.10">
    <property type="entry name" value="Endonuclease Chain A"/>
    <property type="match status" value="2"/>
</dbReference>
<dbReference type="InterPro" id="IPR001736">
    <property type="entry name" value="PLipase_D/transphosphatidylase"/>
</dbReference>
<dbReference type="InterPro" id="IPR010347">
    <property type="entry name" value="Tdp1"/>
</dbReference>
<dbReference type="PANTHER" id="PTHR12415">
    <property type="entry name" value="TYROSYL-DNA PHOSPHODIESTERASE 1"/>
    <property type="match status" value="1"/>
</dbReference>
<dbReference type="PANTHER" id="PTHR12415:SF0">
    <property type="entry name" value="TYROSYL-DNA PHOSPHODIESTERASE 1"/>
    <property type="match status" value="1"/>
</dbReference>
<dbReference type="Pfam" id="PF06087">
    <property type="entry name" value="Tyr-DNA_phospho"/>
    <property type="match status" value="1"/>
</dbReference>
<dbReference type="SUPFAM" id="SSF56024">
    <property type="entry name" value="Phospholipase D/nuclease"/>
    <property type="match status" value="2"/>
</dbReference>
<accession>Q9TXV7</accession>
<name>TYDP1_CAEEL</name>
<gene>
    <name evidence="4" type="primary">tdpo-1</name>
    <name evidence="4" type="ORF">F52C12.1</name>
</gene>
<organism>
    <name type="scientific">Caenorhabditis elegans</name>
    <dbReference type="NCBI Taxonomy" id="6239"/>
    <lineage>
        <taxon>Eukaryota</taxon>
        <taxon>Metazoa</taxon>
        <taxon>Ecdysozoa</taxon>
        <taxon>Nematoda</taxon>
        <taxon>Chromadorea</taxon>
        <taxon>Rhabditida</taxon>
        <taxon>Rhabditina</taxon>
        <taxon>Rhabditomorpha</taxon>
        <taxon>Rhabditoidea</taxon>
        <taxon>Rhabditidae</taxon>
        <taxon>Peloderinae</taxon>
        <taxon>Caenorhabditis</taxon>
    </lineage>
</organism>
<feature type="chain" id="PRO_0000212488" description="Probable tyrosyl-DNA phosphodiesterase">
    <location>
        <begin position="1"/>
        <end position="451"/>
    </location>
</feature>
<feature type="region of interest" description="Disordered" evidence="2">
    <location>
        <begin position="1"/>
        <end position="34"/>
    </location>
</feature>
<feature type="region of interest" description="Interaction with DNA" evidence="1">
    <location>
        <begin position="266"/>
        <end position="269"/>
    </location>
</feature>
<feature type="compositionally biased region" description="Polar residues" evidence="2">
    <location>
        <begin position="22"/>
        <end position="32"/>
    </location>
</feature>
<feature type="active site" description="Nucleophile" evidence="1">
    <location>
        <position position="131"/>
    </location>
</feature>
<feature type="active site" description="Proton donor/acceptor" evidence="1">
    <location>
        <position position="356"/>
    </location>
</feature>
<feature type="binding site" evidence="1">
    <location>
        <position position="133"/>
    </location>
    <ligand>
        <name>substrate</name>
    </ligand>
</feature>
<feature type="binding site" evidence="1">
    <location>
        <position position="358"/>
    </location>
    <ligand>
        <name>substrate</name>
    </ligand>
</feature>
<feature type="site" description="Interaction with DNA" evidence="1">
    <location>
        <position position="379"/>
    </location>
</feature>